<keyword id="KW-0029">Amino-acid transport</keyword>
<keyword id="KW-1003">Cell membrane</keyword>
<keyword id="KW-0472">Membrane</keyword>
<keyword id="KW-1185">Reference proteome</keyword>
<keyword id="KW-0812">Transmembrane</keyword>
<keyword id="KW-1133">Transmembrane helix</keyword>
<keyword id="KW-0813">Transport</keyword>
<keyword id="KW-0832">Ubl conjugation</keyword>
<feature type="chain" id="PRO_0000419939" description="Protein GLUTAMINE DUMPER 1">
    <location>
        <begin position="1"/>
        <end position="158"/>
    </location>
</feature>
<feature type="topological domain" description="Extracellular" evidence="1">
    <location>
        <begin position="1"/>
        <end position="36"/>
    </location>
</feature>
<feature type="transmembrane region" description="Helical" evidence="1">
    <location>
        <begin position="37"/>
        <end position="57"/>
    </location>
</feature>
<feature type="topological domain" description="Cytoplasmic" evidence="1">
    <location>
        <begin position="58"/>
        <end position="158"/>
    </location>
</feature>
<feature type="region of interest" description="Disordered" evidence="2">
    <location>
        <begin position="65"/>
        <end position="85"/>
    </location>
</feature>
<feature type="region of interest" description="Disordered" evidence="2">
    <location>
        <begin position="126"/>
        <end position="158"/>
    </location>
</feature>
<feature type="short sequence motif" description="VIMAG">
    <location>
        <begin position="96"/>
        <end position="100"/>
    </location>
</feature>
<feature type="compositionally biased region" description="Acidic residues" evidence="2">
    <location>
        <begin position="66"/>
        <end position="76"/>
    </location>
</feature>
<feature type="compositionally biased region" description="Basic and acidic residues" evidence="2">
    <location>
        <begin position="131"/>
        <end position="151"/>
    </location>
</feature>
<feature type="mutagenesis site" description="In log1-1; Disrupts the binding with LOG2; Abolishes its function." evidence="4 8">
    <original>G</original>
    <variation>R</variation>
    <location>
        <position position="100"/>
    </location>
</feature>
<feature type="sequence conflict" description="In Ref. 4; BAE99741." evidence="10" ref="4">
    <original>A</original>
    <variation>V</variation>
    <location>
        <position position="49"/>
    </location>
</feature>
<feature type="sequence conflict" description="In Ref. 4; BAE99741." evidence="10" ref="4">
    <original>M</original>
    <variation>V</variation>
    <location>
        <position position="124"/>
    </location>
</feature>
<name>GDU1_ARATH</name>
<proteinExistence type="evidence at protein level"/>
<sequence>MRPLSVQSKFEDVATSTSVNHHGVTPQSPWHSPVPYLFGGLAAMLGLIAFALLILACSYWRLSSSGEEDGQNVDEEKESRSGDKAANGAYEEKFLVIMAGEDLPRYLATPAMKKCTCGGHEGKMVISQEESVAKEEEKMREGEEEKVKDTGETTTTSH</sequence>
<organism>
    <name type="scientific">Arabidopsis thaliana</name>
    <name type="common">Mouse-ear cress</name>
    <dbReference type="NCBI Taxonomy" id="3702"/>
    <lineage>
        <taxon>Eukaryota</taxon>
        <taxon>Viridiplantae</taxon>
        <taxon>Streptophyta</taxon>
        <taxon>Embryophyta</taxon>
        <taxon>Tracheophyta</taxon>
        <taxon>Spermatophyta</taxon>
        <taxon>Magnoliopsida</taxon>
        <taxon>eudicotyledons</taxon>
        <taxon>Gunneridae</taxon>
        <taxon>Pentapetalae</taxon>
        <taxon>rosids</taxon>
        <taxon>malvids</taxon>
        <taxon>Brassicales</taxon>
        <taxon>Brassicaceae</taxon>
        <taxon>Camelineae</taxon>
        <taxon>Arabidopsis</taxon>
    </lineage>
</organism>
<gene>
    <name type="primary">GDU1</name>
    <name type="ordered locus">At4g31730</name>
    <name type="ORF">F28M20.80</name>
</gene>
<reference key="1">
    <citation type="journal article" date="1999" name="Nature">
        <title>Sequence and analysis of chromosome 4 of the plant Arabidopsis thaliana.</title>
        <authorList>
            <person name="Mayer K.F.X."/>
            <person name="Schueller C."/>
            <person name="Wambutt R."/>
            <person name="Murphy G."/>
            <person name="Volckaert G."/>
            <person name="Pohl T."/>
            <person name="Duesterhoeft A."/>
            <person name="Stiekema W."/>
            <person name="Entian K.-D."/>
            <person name="Terryn N."/>
            <person name="Harris B."/>
            <person name="Ansorge W."/>
            <person name="Brandt P."/>
            <person name="Grivell L.A."/>
            <person name="Rieger M."/>
            <person name="Weichselgartner M."/>
            <person name="de Simone V."/>
            <person name="Obermaier B."/>
            <person name="Mache R."/>
            <person name="Mueller M."/>
            <person name="Kreis M."/>
            <person name="Delseny M."/>
            <person name="Puigdomenech P."/>
            <person name="Watson M."/>
            <person name="Schmidtheini T."/>
            <person name="Reichert B."/>
            <person name="Portetelle D."/>
            <person name="Perez-Alonso M."/>
            <person name="Boutry M."/>
            <person name="Bancroft I."/>
            <person name="Vos P."/>
            <person name="Hoheisel J."/>
            <person name="Zimmermann W."/>
            <person name="Wedler H."/>
            <person name="Ridley P."/>
            <person name="Langham S.-A."/>
            <person name="McCullagh B."/>
            <person name="Bilham L."/>
            <person name="Robben J."/>
            <person name="van der Schueren J."/>
            <person name="Grymonprez B."/>
            <person name="Chuang Y.-J."/>
            <person name="Vandenbussche F."/>
            <person name="Braeken M."/>
            <person name="Weltjens I."/>
            <person name="Voet M."/>
            <person name="Bastiaens I."/>
            <person name="Aert R."/>
            <person name="Defoor E."/>
            <person name="Weitzenegger T."/>
            <person name="Bothe G."/>
            <person name="Ramsperger U."/>
            <person name="Hilbert H."/>
            <person name="Braun M."/>
            <person name="Holzer E."/>
            <person name="Brandt A."/>
            <person name="Peters S."/>
            <person name="van Staveren M."/>
            <person name="Dirkse W."/>
            <person name="Mooijman P."/>
            <person name="Klein Lankhorst R."/>
            <person name="Rose M."/>
            <person name="Hauf J."/>
            <person name="Koetter P."/>
            <person name="Berneiser S."/>
            <person name="Hempel S."/>
            <person name="Feldpausch M."/>
            <person name="Lamberth S."/>
            <person name="Van den Daele H."/>
            <person name="De Keyser A."/>
            <person name="Buysshaert C."/>
            <person name="Gielen J."/>
            <person name="Villarroel R."/>
            <person name="De Clercq R."/>
            <person name="van Montagu M."/>
            <person name="Rogers J."/>
            <person name="Cronin A."/>
            <person name="Quail M.A."/>
            <person name="Bray-Allen S."/>
            <person name="Clark L."/>
            <person name="Doggett J."/>
            <person name="Hall S."/>
            <person name="Kay M."/>
            <person name="Lennard N."/>
            <person name="McLay K."/>
            <person name="Mayes R."/>
            <person name="Pettett A."/>
            <person name="Rajandream M.A."/>
            <person name="Lyne M."/>
            <person name="Benes V."/>
            <person name="Rechmann S."/>
            <person name="Borkova D."/>
            <person name="Bloecker H."/>
            <person name="Scharfe M."/>
            <person name="Grimm M."/>
            <person name="Loehnert T.-H."/>
            <person name="Dose S."/>
            <person name="de Haan M."/>
            <person name="Maarse A.C."/>
            <person name="Schaefer M."/>
            <person name="Mueller-Auer S."/>
            <person name="Gabel C."/>
            <person name="Fuchs M."/>
            <person name="Fartmann B."/>
            <person name="Granderath K."/>
            <person name="Dauner D."/>
            <person name="Herzl A."/>
            <person name="Neumann S."/>
            <person name="Argiriou A."/>
            <person name="Vitale D."/>
            <person name="Liguori R."/>
            <person name="Piravandi E."/>
            <person name="Massenet O."/>
            <person name="Quigley F."/>
            <person name="Clabauld G."/>
            <person name="Muendlein A."/>
            <person name="Felber R."/>
            <person name="Schnabl S."/>
            <person name="Hiller R."/>
            <person name="Schmidt W."/>
            <person name="Lecharny A."/>
            <person name="Aubourg S."/>
            <person name="Chefdor F."/>
            <person name="Cooke R."/>
            <person name="Berger C."/>
            <person name="Monfort A."/>
            <person name="Casacuberta E."/>
            <person name="Gibbons T."/>
            <person name="Weber N."/>
            <person name="Vandenbol M."/>
            <person name="Bargues M."/>
            <person name="Terol J."/>
            <person name="Torres A."/>
            <person name="Perez-Perez A."/>
            <person name="Purnelle B."/>
            <person name="Bent E."/>
            <person name="Johnson S."/>
            <person name="Tacon D."/>
            <person name="Jesse T."/>
            <person name="Heijnen L."/>
            <person name="Schwarz S."/>
            <person name="Scholler P."/>
            <person name="Heber S."/>
            <person name="Francs P."/>
            <person name="Bielke C."/>
            <person name="Frishman D."/>
            <person name="Haase D."/>
            <person name="Lemcke K."/>
            <person name="Mewes H.-W."/>
            <person name="Stocker S."/>
            <person name="Zaccaria P."/>
            <person name="Bevan M."/>
            <person name="Wilson R.K."/>
            <person name="de la Bastide M."/>
            <person name="Habermann K."/>
            <person name="Parnell L."/>
            <person name="Dedhia N."/>
            <person name="Gnoj L."/>
            <person name="Schutz K."/>
            <person name="Huang E."/>
            <person name="Spiegel L."/>
            <person name="Sekhon M."/>
            <person name="Murray J."/>
            <person name="Sheet P."/>
            <person name="Cordes M."/>
            <person name="Abu-Threideh J."/>
            <person name="Stoneking T."/>
            <person name="Kalicki J."/>
            <person name="Graves T."/>
            <person name="Harmon G."/>
            <person name="Edwards J."/>
            <person name="Latreille P."/>
            <person name="Courtney L."/>
            <person name="Cloud J."/>
            <person name="Abbott A."/>
            <person name="Scott K."/>
            <person name="Johnson D."/>
            <person name="Minx P."/>
            <person name="Bentley D."/>
            <person name="Fulton B."/>
            <person name="Miller N."/>
            <person name="Greco T."/>
            <person name="Kemp K."/>
            <person name="Kramer J."/>
            <person name="Fulton L."/>
            <person name="Mardis E."/>
            <person name="Dante M."/>
            <person name="Pepin K."/>
            <person name="Hillier L.W."/>
            <person name="Nelson J."/>
            <person name="Spieth J."/>
            <person name="Ryan E."/>
            <person name="Andrews S."/>
            <person name="Geisel C."/>
            <person name="Layman D."/>
            <person name="Du H."/>
            <person name="Ali J."/>
            <person name="Berghoff A."/>
            <person name="Jones K."/>
            <person name="Drone K."/>
            <person name="Cotton M."/>
            <person name="Joshu C."/>
            <person name="Antonoiu B."/>
            <person name="Zidanic M."/>
            <person name="Strong C."/>
            <person name="Sun H."/>
            <person name="Lamar B."/>
            <person name="Yordan C."/>
            <person name="Ma P."/>
            <person name="Zhong J."/>
            <person name="Preston R."/>
            <person name="Vil D."/>
            <person name="Shekher M."/>
            <person name="Matero A."/>
            <person name="Shah R."/>
            <person name="Swaby I.K."/>
            <person name="O'Shaughnessy A."/>
            <person name="Rodriguez M."/>
            <person name="Hoffman J."/>
            <person name="Till S."/>
            <person name="Granat S."/>
            <person name="Shohdy N."/>
            <person name="Hasegawa A."/>
            <person name="Hameed A."/>
            <person name="Lodhi M."/>
            <person name="Johnson A."/>
            <person name="Chen E."/>
            <person name="Marra M.A."/>
            <person name="Martienssen R."/>
            <person name="McCombie W.R."/>
        </authorList>
    </citation>
    <scope>NUCLEOTIDE SEQUENCE [LARGE SCALE GENOMIC DNA]</scope>
    <source>
        <strain>cv. Columbia</strain>
    </source>
</reference>
<reference key="2">
    <citation type="journal article" date="2017" name="Plant J.">
        <title>Araport11: a complete reannotation of the Arabidopsis thaliana reference genome.</title>
        <authorList>
            <person name="Cheng C.Y."/>
            <person name="Krishnakumar V."/>
            <person name="Chan A.P."/>
            <person name="Thibaud-Nissen F."/>
            <person name="Schobel S."/>
            <person name="Town C.D."/>
        </authorList>
    </citation>
    <scope>GENOME REANNOTATION</scope>
    <source>
        <strain>cv. Columbia</strain>
    </source>
</reference>
<reference key="3">
    <citation type="submission" date="2004-03" db="EMBL/GenBank/DDBJ databases">
        <title>Arabidopsis ORF clones.</title>
        <authorList>
            <person name="Cheuk R.F."/>
            <person name="Chen H."/>
            <person name="Kim C.J."/>
            <person name="Shinn P."/>
            <person name="Ecker J.R."/>
        </authorList>
    </citation>
    <scope>NUCLEOTIDE SEQUENCE [LARGE SCALE MRNA]</scope>
    <source>
        <strain>cv. Columbia</strain>
    </source>
</reference>
<reference key="4">
    <citation type="submission" date="2006-07" db="EMBL/GenBank/DDBJ databases">
        <title>Large-scale analysis of RIKEN Arabidopsis full-length (RAFL) cDNAs.</title>
        <authorList>
            <person name="Totoki Y."/>
            <person name="Seki M."/>
            <person name="Ishida J."/>
            <person name="Nakajima M."/>
            <person name="Enju A."/>
            <person name="Kamiya A."/>
            <person name="Narusaka M."/>
            <person name="Shin-i T."/>
            <person name="Nakagawa M."/>
            <person name="Sakamoto N."/>
            <person name="Oishi K."/>
            <person name="Kohara Y."/>
            <person name="Kobayashi M."/>
            <person name="Toyoda A."/>
            <person name="Sakaki Y."/>
            <person name="Sakurai T."/>
            <person name="Iida K."/>
            <person name="Akiyama K."/>
            <person name="Satou M."/>
            <person name="Toyoda T."/>
            <person name="Konagaya A."/>
            <person name="Carninci P."/>
            <person name="Kawai J."/>
            <person name="Hayashizaki Y."/>
            <person name="Shinozaki K."/>
        </authorList>
    </citation>
    <scope>NUCLEOTIDE SEQUENCE [LARGE SCALE MRNA]</scope>
    <source>
        <strain>cv. Columbia</strain>
    </source>
</reference>
<reference key="5">
    <citation type="journal article" date="2004" name="Plant Cell">
        <title>Overexpression of GLUTAMINE DUMPER1 leads to hypersecretion of glutamine from hydathodes of Arabidopsis leaves.</title>
        <authorList>
            <person name="Pilot G."/>
            <person name="Stransky H."/>
            <person name="Bushey D.F."/>
            <person name="Pratelli R."/>
            <person name="Ludewig U."/>
            <person name="Wingate V.P."/>
            <person name="Frommer W.B."/>
        </authorList>
    </citation>
    <scope>GENE FAMILY</scope>
    <scope>FUNCTION</scope>
    <scope>TISSUE SPECIFICITY</scope>
    <scope>SUBCELLULAR LOCATION</scope>
</reference>
<reference key="6">
    <citation type="journal article" date="2006" name="FEBS Lett.">
        <title>The plant-specific VIMAG domain of Glutamine Dumper1 is necessary for the function of the protein in Arabidopsis.</title>
        <authorList>
            <person name="Pratelli R."/>
            <person name="Pilot G."/>
        </authorList>
    </citation>
    <scope>GENE FAMILY</scope>
    <scope>DOMAIN</scope>
    <scope>FUNCTION</scope>
    <scope>MUTAGENESIS OF GLY-100</scope>
</reference>
<reference key="7">
    <citation type="journal article" date="2007" name="FEBS Lett.">
        <authorList>
            <person name="Pratelli R."/>
            <person name="Pilot G."/>
        </authorList>
    </citation>
    <scope>ERRATUM OF PUBMED:17157837</scope>
</reference>
<reference key="8">
    <citation type="journal article" date="2007" name="Plant Signal. Behav.">
        <title>Altered amino acid metabolism in glutamine dumper1 plants.</title>
        <authorList>
            <person name="Pratelli R."/>
            <person name="Pilot G."/>
        </authorList>
    </citation>
    <scope>FUNCTION</scope>
</reference>
<reference key="9">
    <citation type="book" date="2008" name="Proceedings of the 19th international conference on Arabidopsis research">
        <title>The over-expression of GDU-like genes leads to modification in amino acid content and transport.</title>
        <authorList>
            <person name="Pratelli R."/>
            <person name="Frommer W.B."/>
            <person name="Pilot G."/>
        </authorList>
    </citation>
    <scope>FUNCTION</scope>
    <scope>TISSUE SPECIFICITY</scope>
    <scope>SUBCELLULAR LOCATION</scope>
</reference>
<reference key="10">
    <citation type="journal article" date="2010" name="Plant J.">
        <title>Up-regulation of LSB1/GDU3 affects geminivirus infection by activating the salicylic acid pathway.</title>
        <authorList>
            <person name="Chen H."/>
            <person name="Zhang Z."/>
            <person name="Teng K."/>
            <person name="Lai J."/>
            <person name="Zhang Y."/>
            <person name="Huang Y."/>
            <person name="Li Y."/>
            <person name="Liang L."/>
            <person name="Wang Y."/>
            <person name="Chu C."/>
            <person name="Guo H."/>
            <person name="Xie Q."/>
        </authorList>
    </citation>
    <scope>FUNCTION</scope>
</reference>
<reference key="11">
    <citation type="journal article" date="2010" name="Plant Physiol.">
        <title>Stimulation of nonselective amino acid export by glutamine dumper proteins.</title>
        <authorList>
            <person name="Pratelli R."/>
            <person name="Voll L.M."/>
            <person name="Horst R.J."/>
            <person name="Frommer W.B."/>
            <person name="Pilot G."/>
        </authorList>
    </citation>
    <scope>FUNCTION</scope>
    <scope>TISSUE SPECIFICITY</scope>
</reference>
<reference key="12">
    <citation type="journal article" date="2012" name="Plant Physiol.">
        <title>The ubiquitin E3 ligase LOSS OF GDU2 is required for GLUTAMINE DUMPER1-induced amino acid secretion in Arabidopsis.</title>
        <authorList>
            <person name="Pratelli R."/>
            <person name="Guerra D.D."/>
            <person name="Yu S."/>
            <person name="Wogulis M."/>
            <person name="Kraft E."/>
            <person name="Frommer W.B."/>
            <person name="Callis J."/>
            <person name="Pilot G."/>
        </authorList>
    </citation>
    <scope>INTERACTION WITH LOG2</scope>
    <scope>FUNCTION</scope>
    <scope>UBIQUITINATION</scope>
    <scope>MUTAGENESIS OF GLY-100</scope>
    <scope>SUBCELLULAR LOCATION</scope>
</reference>
<protein>
    <recommendedName>
        <fullName>Protein GLUTAMINE DUMPER 1</fullName>
    </recommendedName>
</protein>
<evidence type="ECO:0000255" key="1"/>
<evidence type="ECO:0000256" key="2">
    <source>
        <dbReference type="SAM" id="MobiDB-lite"/>
    </source>
</evidence>
<evidence type="ECO:0000269" key="3">
    <source>
    </source>
</evidence>
<evidence type="ECO:0000269" key="4">
    <source>
    </source>
</evidence>
<evidence type="ECO:0000269" key="5">
    <source>
    </source>
</evidence>
<evidence type="ECO:0000269" key="6">
    <source>
    </source>
</evidence>
<evidence type="ECO:0000269" key="7">
    <source>
    </source>
</evidence>
<evidence type="ECO:0000269" key="8">
    <source>
    </source>
</evidence>
<evidence type="ECO:0000269" key="9">
    <source ref="9"/>
</evidence>
<evidence type="ECO:0000305" key="10"/>
<accession>O81775</accession>
<accession>Q0WT07</accession>
<comment type="function">
    <text evidence="3 4 5 6 7 8 9">Probable subunit of an amino acid transporter involved in the regulation of the amino acid metabolism. Stimulates amino acid export by activating nonselective amino acid facilitators. Required the interaction with the RING-type E3 ubiquitin-protein ligase LOG2 to fulfill its function. Plays a role in the Gln export at hydathodes, at xylem parenchyma into xylem sap and from mesophyll into leaf apoplasm. Acts upstream genes involved in the salicylic acid (SA) pathway and in the geminivirus-host interaction.</text>
</comment>
<comment type="subunit">
    <text evidence="8">Interacts with LOG2.</text>
</comment>
<comment type="interaction">
    <interactant intactId="EBI-6290661">
        <id>O81775</id>
    </interactant>
    <interactant intactId="EBI-6290644">
        <id>Q9S752</id>
        <label>LOG2</label>
    </interactant>
    <organismsDiffer>false</organismsDiffer>
    <experiments>15</experiments>
</comment>
<comment type="interaction">
    <interactant intactId="EBI-6290661">
        <id>O81775</id>
    </interactant>
    <interactant intactId="EBI-920669">
        <id>Q5XIQ4</id>
        <label>Mgrn1</label>
    </interactant>
    <organismsDiffer>true</organismsDiffer>
    <experiments>3</experiments>
</comment>
<comment type="subcellular location">
    <subcellularLocation>
        <location evidence="3 8 9">Cell membrane</location>
        <topology evidence="3 8 9">Single-pass membrane protein</topology>
    </subcellularLocation>
</comment>
<comment type="tissue specificity">
    <text evidence="3 6 9">Expressed in the vascular tissues and in hydathodes. Expressed in the phloem and xylem (at the protein level).</text>
</comment>
<comment type="domain">
    <text evidence="4">The VIMAG motif is necessary for the function of the protein.</text>
</comment>
<comment type="PTM">
    <text evidence="8">Ubiquitinated by LOG2 (in vitro).</text>
</comment>
<comment type="miscellaneous">
    <text>Overexpression of GLUTAMINE DUMPER 1 leads to free amino acid levels accumulation, plant size decrease, hypersecretion of glutamine from hydathodes and to a full resistance to geminivirus infection (PubMed:15208395, PubMed:20018597, PubMed:20042021, Ref.9).</text>
</comment>
<comment type="similarity">
    <text evidence="10">Belongs to the GLUTAMINE DUMPER 1 (TC 9.B.60) family.</text>
</comment>
<dbReference type="EMBL" id="AL031004">
    <property type="protein sequence ID" value="CAA19750.1"/>
    <property type="molecule type" value="Genomic_DNA"/>
</dbReference>
<dbReference type="EMBL" id="AL161579">
    <property type="protein sequence ID" value="CAB79891.1"/>
    <property type="molecule type" value="Genomic_DNA"/>
</dbReference>
<dbReference type="EMBL" id="CP002687">
    <property type="protein sequence ID" value="AEE85951.1"/>
    <property type="molecule type" value="Genomic_DNA"/>
</dbReference>
<dbReference type="EMBL" id="BT011573">
    <property type="protein sequence ID" value="AAS46626.1"/>
    <property type="molecule type" value="mRNA"/>
</dbReference>
<dbReference type="EMBL" id="BT012238">
    <property type="protein sequence ID" value="AAS76725.1"/>
    <property type="molecule type" value="mRNA"/>
</dbReference>
<dbReference type="EMBL" id="AK227758">
    <property type="protein sequence ID" value="BAE99741.1"/>
    <property type="molecule type" value="mRNA"/>
</dbReference>
<dbReference type="PIR" id="T05097">
    <property type="entry name" value="T05097"/>
</dbReference>
<dbReference type="RefSeq" id="NP_194901.1">
    <property type="nucleotide sequence ID" value="NM_119322.4"/>
</dbReference>
<dbReference type="SMR" id="O81775"/>
<dbReference type="BioGRID" id="14587">
    <property type="interactions" value="5"/>
</dbReference>
<dbReference type="FunCoup" id="O81775">
    <property type="interactions" value="1"/>
</dbReference>
<dbReference type="IntAct" id="O81775">
    <property type="interactions" value="4"/>
</dbReference>
<dbReference type="MINT" id="O81775"/>
<dbReference type="STRING" id="3702.O81775"/>
<dbReference type="TCDB" id="1.A.41.2.2">
    <property type="family name" value="the avian reovirus p10 viroporin/glutamine dumper 1 (p10 viroporin/gdu1) family"/>
</dbReference>
<dbReference type="GlyGen" id="O81775">
    <property type="glycosylation" value="1 site"/>
</dbReference>
<dbReference type="PaxDb" id="3702-AT4G31730.1"/>
<dbReference type="ProteomicsDB" id="247123"/>
<dbReference type="EnsemblPlants" id="AT4G31730.1">
    <property type="protein sequence ID" value="AT4G31730.1"/>
    <property type="gene ID" value="AT4G31730"/>
</dbReference>
<dbReference type="GeneID" id="829301"/>
<dbReference type="Gramene" id="AT4G31730.1">
    <property type="protein sequence ID" value="AT4G31730.1"/>
    <property type="gene ID" value="AT4G31730"/>
</dbReference>
<dbReference type="KEGG" id="ath:AT4G31730"/>
<dbReference type="Araport" id="AT4G31730"/>
<dbReference type="TAIR" id="AT4G31730">
    <property type="gene designation" value="GDU1"/>
</dbReference>
<dbReference type="eggNOG" id="ENOG502S4AK">
    <property type="taxonomic scope" value="Eukaryota"/>
</dbReference>
<dbReference type="HOGENOM" id="CLU_112624_2_1_1"/>
<dbReference type="InParanoid" id="O81775"/>
<dbReference type="OMA" id="CTCGGHE"/>
<dbReference type="OrthoDB" id="1930784at2759"/>
<dbReference type="PhylomeDB" id="O81775"/>
<dbReference type="PRO" id="PR:O81775"/>
<dbReference type="Proteomes" id="UP000006548">
    <property type="component" value="Chromosome 4"/>
</dbReference>
<dbReference type="ExpressionAtlas" id="O81775">
    <property type="expression patterns" value="baseline and differential"/>
</dbReference>
<dbReference type="GO" id="GO:0016020">
    <property type="term" value="C:membrane"/>
    <property type="evidence" value="ECO:0000314"/>
    <property type="project" value="UniProtKB"/>
</dbReference>
<dbReference type="GO" id="GO:0005634">
    <property type="term" value="C:nucleus"/>
    <property type="evidence" value="ECO:0007005"/>
    <property type="project" value="TAIR"/>
</dbReference>
<dbReference type="GO" id="GO:0005886">
    <property type="term" value="C:plasma membrane"/>
    <property type="evidence" value="ECO:0007669"/>
    <property type="project" value="UniProtKB-SubCell"/>
</dbReference>
<dbReference type="GO" id="GO:0010585">
    <property type="term" value="P:glutamine secretion"/>
    <property type="evidence" value="ECO:0000315"/>
    <property type="project" value="TAIR"/>
</dbReference>
<dbReference type="GO" id="GO:0080143">
    <property type="term" value="P:regulation of amino acid export"/>
    <property type="evidence" value="ECO:0000315"/>
    <property type="project" value="UniProtKB"/>
</dbReference>
<dbReference type="GO" id="GO:0006521">
    <property type="term" value="P:regulation of amino acid metabolic process"/>
    <property type="evidence" value="ECO:0000315"/>
    <property type="project" value="UniProtKB"/>
</dbReference>
<dbReference type="InterPro" id="IPR040359">
    <property type="entry name" value="GDU"/>
</dbReference>
<dbReference type="PANTHER" id="PTHR33228:SF30">
    <property type="entry name" value="PROTEIN GLUTAMINE DUMPER 1"/>
    <property type="match status" value="1"/>
</dbReference>
<dbReference type="PANTHER" id="PTHR33228">
    <property type="entry name" value="PROTEIN GLUTAMINE DUMPER 4-RELATED"/>
    <property type="match status" value="1"/>
</dbReference>